<organism>
    <name type="scientific">Drosophila willistoni</name>
    <name type="common">Fruit fly</name>
    <dbReference type="NCBI Taxonomy" id="7260"/>
    <lineage>
        <taxon>Eukaryota</taxon>
        <taxon>Metazoa</taxon>
        <taxon>Ecdysozoa</taxon>
        <taxon>Arthropoda</taxon>
        <taxon>Hexapoda</taxon>
        <taxon>Insecta</taxon>
        <taxon>Pterygota</taxon>
        <taxon>Neoptera</taxon>
        <taxon>Endopterygota</taxon>
        <taxon>Diptera</taxon>
        <taxon>Brachycera</taxon>
        <taxon>Muscomorpha</taxon>
        <taxon>Ephydroidea</taxon>
        <taxon>Drosophilidae</taxon>
        <taxon>Drosophila</taxon>
        <taxon>Sophophora</taxon>
    </lineage>
</organism>
<name>NCBP2_DROWI</name>
<proteinExistence type="inferred from homology"/>
<accession>B4NB54</accession>
<reference key="1">
    <citation type="journal article" date="2007" name="Nature">
        <title>Evolution of genes and genomes on the Drosophila phylogeny.</title>
        <authorList>
            <consortium name="Drosophila 12 genomes consortium"/>
        </authorList>
    </citation>
    <scope>NUCLEOTIDE SEQUENCE [LARGE SCALE GENOMIC DNA]</scope>
    <source>
        <strain>Tucson 14030-0811.24</strain>
    </source>
</reference>
<feature type="chain" id="PRO_0000385274" description="Nuclear cap-binding protein subunit 2">
    <location>
        <begin position="1"/>
        <end position="154"/>
    </location>
</feature>
<feature type="domain" description="RRM" evidence="2">
    <location>
        <begin position="30"/>
        <end position="108"/>
    </location>
</feature>
<feature type="binding site" evidence="1">
    <location>
        <position position="10"/>
    </location>
    <ligand>
        <name>mRNA</name>
        <dbReference type="ChEBI" id="CHEBI:33699"/>
    </ligand>
    <ligandPart>
        <name>mRNA cap</name>
    </ligandPart>
</feature>
<feature type="binding site" evidence="1">
    <location>
        <position position="33"/>
    </location>
    <ligand>
        <name>mRNA</name>
        <dbReference type="ChEBI" id="CHEBI:33699"/>
    </ligand>
    <ligandPart>
        <name>mRNA cap</name>
    </ligandPart>
</feature>
<feature type="binding site" evidence="1">
    <location>
        <begin position="102"/>
        <end position="106"/>
    </location>
    <ligand>
        <name>mRNA</name>
        <dbReference type="ChEBI" id="CHEBI:33699"/>
    </ligand>
    <ligandPart>
        <name>mRNA cap</name>
    </ligandPart>
</feature>
<feature type="binding site" evidence="1">
    <location>
        <begin position="113"/>
        <end position="117"/>
    </location>
    <ligand>
        <name>mRNA</name>
        <dbReference type="ChEBI" id="CHEBI:33699"/>
    </ligand>
    <ligandPart>
        <name>mRNA cap</name>
    </ligandPart>
</feature>
<feature type="binding site" evidence="1">
    <location>
        <begin position="123"/>
        <end position="124"/>
    </location>
    <ligand>
        <name>mRNA</name>
        <dbReference type="ChEBI" id="CHEBI:33699"/>
    </ligand>
    <ligandPart>
        <name>mRNA cap</name>
    </ligandPart>
</feature>
<dbReference type="EMBL" id="CH964232">
    <property type="protein sequence ID" value="EDW81018.1"/>
    <property type="molecule type" value="Genomic_DNA"/>
</dbReference>
<dbReference type="SMR" id="B4NB54"/>
<dbReference type="STRING" id="7260.B4NB54"/>
<dbReference type="EnsemblMetazoa" id="FBtr0241895">
    <property type="protein sequence ID" value="FBpp0240387"/>
    <property type="gene ID" value="FBgn0213255"/>
</dbReference>
<dbReference type="EnsemblMetazoa" id="XM_002069996.4">
    <property type="protein sequence ID" value="XP_002070032.1"/>
    <property type="gene ID" value="LOC6647606"/>
</dbReference>
<dbReference type="GeneID" id="6647606"/>
<dbReference type="KEGG" id="dwi:6647606"/>
<dbReference type="CTD" id="42166"/>
<dbReference type="eggNOG" id="KOG0121">
    <property type="taxonomic scope" value="Eukaryota"/>
</dbReference>
<dbReference type="HOGENOM" id="CLU_070952_2_0_1"/>
<dbReference type="OMA" id="DIRRIIM"/>
<dbReference type="OrthoDB" id="201398at2759"/>
<dbReference type="PhylomeDB" id="B4NB54"/>
<dbReference type="Proteomes" id="UP000007798">
    <property type="component" value="Unassembled WGS sequence"/>
</dbReference>
<dbReference type="GO" id="GO:0005846">
    <property type="term" value="C:nuclear cap binding complex"/>
    <property type="evidence" value="ECO:0007669"/>
    <property type="project" value="InterPro"/>
</dbReference>
<dbReference type="GO" id="GO:0005634">
    <property type="term" value="C:nucleus"/>
    <property type="evidence" value="ECO:0007669"/>
    <property type="project" value="UniProtKB-SubCell"/>
</dbReference>
<dbReference type="GO" id="GO:0099523">
    <property type="term" value="C:presynaptic cytosol"/>
    <property type="evidence" value="ECO:0007669"/>
    <property type="project" value="EnsemblMetazoa"/>
</dbReference>
<dbReference type="GO" id="GO:0000339">
    <property type="term" value="F:RNA cap binding"/>
    <property type="evidence" value="ECO:0007669"/>
    <property type="project" value="InterPro"/>
</dbReference>
<dbReference type="GO" id="GO:0045292">
    <property type="term" value="P:mRNA cis splicing, via spliceosome"/>
    <property type="evidence" value="ECO:0007669"/>
    <property type="project" value="InterPro"/>
</dbReference>
<dbReference type="GO" id="GO:0045071">
    <property type="term" value="P:negative regulation of viral genome replication"/>
    <property type="evidence" value="ECO:0007669"/>
    <property type="project" value="EnsemblMetazoa"/>
</dbReference>
<dbReference type="GO" id="GO:0031053">
    <property type="term" value="P:primary miRNA processing"/>
    <property type="evidence" value="ECO:0007669"/>
    <property type="project" value="EnsemblMetazoa"/>
</dbReference>
<dbReference type="GO" id="GO:0035194">
    <property type="term" value="P:regulatory ncRNA-mediated post-transcriptional gene silencing"/>
    <property type="evidence" value="ECO:0007669"/>
    <property type="project" value="EnsemblMetazoa"/>
</dbReference>
<dbReference type="GO" id="GO:0030422">
    <property type="term" value="P:siRNA processing"/>
    <property type="evidence" value="ECO:0007669"/>
    <property type="project" value="EnsemblMetazoa"/>
</dbReference>
<dbReference type="CDD" id="cd12240">
    <property type="entry name" value="RRM_NCBP2"/>
    <property type="match status" value="1"/>
</dbReference>
<dbReference type="FunFam" id="3.30.70.330:FF:000128">
    <property type="entry name" value="Nuclear cap-binding protein subunit 2"/>
    <property type="match status" value="1"/>
</dbReference>
<dbReference type="Gene3D" id="3.30.70.330">
    <property type="match status" value="1"/>
</dbReference>
<dbReference type="InterPro" id="IPR027157">
    <property type="entry name" value="NCBP2"/>
</dbReference>
<dbReference type="InterPro" id="IPR034148">
    <property type="entry name" value="NCBP2_RRM"/>
</dbReference>
<dbReference type="InterPro" id="IPR012677">
    <property type="entry name" value="Nucleotide-bd_a/b_plait_sf"/>
</dbReference>
<dbReference type="InterPro" id="IPR035979">
    <property type="entry name" value="RBD_domain_sf"/>
</dbReference>
<dbReference type="InterPro" id="IPR000504">
    <property type="entry name" value="RRM_dom"/>
</dbReference>
<dbReference type="PANTHER" id="PTHR18847">
    <property type="entry name" value="20 KD NUCLEAR CAP BINDING PROTEIN"/>
    <property type="match status" value="1"/>
</dbReference>
<dbReference type="PANTHER" id="PTHR18847:SF0">
    <property type="entry name" value="NUCLEAR CAP-BINDING PROTEIN SUBUNIT 2"/>
    <property type="match status" value="1"/>
</dbReference>
<dbReference type="Pfam" id="PF00076">
    <property type="entry name" value="RRM_1"/>
    <property type="match status" value="1"/>
</dbReference>
<dbReference type="SMART" id="SM00360">
    <property type="entry name" value="RRM"/>
    <property type="match status" value="1"/>
</dbReference>
<dbReference type="SUPFAM" id="SSF54928">
    <property type="entry name" value="RNA-binding domain, RBD"/>
    <property type="match status" value="1"/>
</dbReference>
<dbReference type="PROSITE" id="PS50102">
    <property type="entry name" value="RRM"/>
    <property type="match status" value="1"/>
</dbReference>
<protein>
    <recommendedName>
        <fullName>Nuclear cap-binding protein subunit 2</fullName>
    </recommendedName>
    <alternativeName>
        <fullName>20 kDa nuclear cap-binding protein</fullName>
    </alternativeName>
    <alternativeName>
        <fullName>NCBP 20 kDa subunit</fullName>
        <shortName>CBP20</shortName>
    </alternativeName>
</protein>
<sequence length="154" mass="17734">MSNSVELSSYRDQHFKGSRSEQERSLKESCTLYVGNLSFYTTEEQIHELFSRCGDVRLIVMGLDKYKKTPCGFCFVEYYTRSEAESAMRFVNGTRLDDRLIRVDWDAGFIEGRQYGRGKTGGQVRDEYRTDYDAGRGGYGKLLSQKIAPNTDNR</sequence>
<keyword id="KW-0507">mRNA processing</keyword>
<keyword id="KW-0508">mRNA splicing</keyword>
<keyword id="KW-0539">Nucleus</keyword>
<keyword id="KW-1185">Reference proteome</keyword>
<keyword id="KW-0694">RNA-binding</keyword>
<keyword id="KW-0943">RNA-mediated gene silencing</keyword>
<evidence type="ECO:0000250" key="1"/>
<evidence type="ECO:0000255" key="2">
    <source>
        <dbReference type="PROSITE-ProRule" id="PRU00176"/>
    </source>
</evidence>
<evidence type="ECO:0000305" key="3"/>
<comment type="function">
    <text evidence="1">Component of the cap-binding complex (CBC), which binds co-transcriptionally to the 5' cap of pre-mRNAs and is involved in various processes such as pre-mRNA splicing and RNA-mediated gene silencing (RNAi). The CBC complex is involved in miRNA-mediated RNA interference via its interaction with Ars2 and is required for primary microRNAs (miRNAs) processing. Also involved in innate immunity via the short interfering RNAs (siRNAs) processing machinery by restricting the viral RNA production. In the CBC complex, Cbp20 recognizes and binds capped RNAs (m7GpppG-capped RNA) but requires Cbp80 to stabilize the movement of its N-terminal loop and lock the CBC into a high affinity cap-binding state with the cap structure (By similarity).</text>
</comment>
<comment type="subunit">
    <text evidence="1">Component of the nuclear cap-binding complex (CBC), a heterodimer composed of Cbp80 and Cbp20 that interacts with m7GpppG-capped RNA. Interacts with Ars2 (By similarity).</text>
</comment>
<comment type="subcellular location">
    <subcellularLocation>
        <location evidence="1">Nucleus</location>
    </subcellularLocation>
</comment>
<comment type="similarity">
    <text evidence="3">Belongs to the RRM NCBP2 family.</text>
</comment>
<gene>
    <name type="primary">Cbp20</name>
    <name type="ORF">GK11244</name>
</gene>